<gene>
    <name evidence="4" type="primary">SFM1</name>
    <name evidence="7" type="ordered locus">YOR021C</name>
    <name type="ORF">OR26.11</name>
</gene>
<keyword id="KW-0002">3D-structure</keyword>
<keyword id="KW-0963">Cytoplasm</keyword>
<keyword id="KW-0489">Methyltransferase</keyword>
<keyword id="KW-0597">Phosphoprotein</keyword>
<keyword id="KW-1185">Reference proteome</keyword>
<keyword id="KW-0949">S-adenosyl-L-methionine</keyword>
<keyword id="KW-0808">Transferase</keyword>
<organism>
    <name type="scientific">Saccharomyces cerevisiae (strain ATCC 204508 / S288c)</name>
    <name type="common">Baker's yeast</name>
    <dbReference type="NCBI Taxonomy" id="559292"/>
    <lineage>
        <taxon>Eukaryota</taxon>
        <taxon>Fungi</taxon>
        <taxon>Dikarya</taxon>
        <taxon>Ascomycota</taxon>
        <taxon>Saccharomycotina</taxon>
        <taxon>Saccharomycetes</taxon>
        <taxon>Saccharomycetales</taxon>
        <taxon>Saccharomycetaceae</taxon>
        <taxon>Saccharomyces</taxon>
    </lineage>
</organism>
<protein>
    <recommendedName>
        <fullName evidence="6">Protein arginine N-methyltransferase SFM1</fullName>
        <ecNumber evidence="3">2.1.1.-</ecNumber>
    </recommendedName>
    <alternativeName>
        <fullName evidence="4">SPOUT family methyltransferase 1</fullName>
    </alternativeName>
</protein>
<comment type="function">
    <text evidence="3">S-adenosyl-L-methionine-dependent protein-arginine N-methyltransferase that monomethylates ribosomal protein S3 (RPS3) at 'Arg-146'.</text>
</comment>
<comment type="subcellular location">
    <subcellularLocation>
        <location evidence="1">Cytoplasm</location>
    </subcellularLocation>
</comment>
<comment type="miscellaneous">
    <text evidence="2">Present with 2520 molecules/cell in log phase SD medium.</text>
</comment>
<comment type="similarity">
    <text evidence="5">Belongs to the class IV-like SAM-binding methyltransferase superfamily. Protein arginine N-methyltransferase SFM1 family.</text>
</comment>
<feature type="chain" id="PRO_0000237643" description="Protein arginine N-methyltransferase SFM1">
    <location>
        <begin position="1"/>
        <end position="213"/>
    </location>
</feature>
<feature type="modified residue" description="Phosphoserine" evidence="8">
    <location>
        <position position="204"/>
    </location>
</feature>
<feature type="modified residue" description="Phosphoserine" evidence="8">
    <location>
        <position position="207"/>
    </location>
</feature>
<feature type="strand" evidence="10">
    <location>
        <begin position="2"/>
        <end position="7"/>
    </location>
</feature>
<feature type="strand" evidence="10">
    <location>
        <begin position="9"/>
        <end position="11"/>
    </location>
</feature>
<feature type="helix" evidence="10">
    <location>
        <begin position="14"/>
        <end position="27"/>
    </location>
</feature>
<feature type="helix" evidence="10">
    <location>
        <begin position="29"/>
        <end position="31"/>
    </location>
</feature>
<feature type="strand" evidence="10">
    <location>
        <begin position="32"/>
        <end position="35"/>
    </location>
</feature>
<feature type="helix" evidence="10">
    <location>
        <begin position="43"/>
        <end position="45"/>
    </location>
</feature>
<feature type="helix" evidence="10">
    <location>
        <begin position="48"/>
        <end position="52"/>
    </location>
</feature>
<feature type="helix" evidence="10">
    <location>
        <begin position="62"/>
        <end position="64"/>
    </location>
</feature>
<feature type="helix" evidence="10">
    <location>
        <begin position="65"/>
        <end position="68"/>
    </location>
</feature>
<feature type="strand" evidence="10">
    <location>
        <begin position="79"/>
        <end position="83"/>
    </location>
</feature>
<feature type="strand" evidence="10">
    <location>
        <begin position="88"/>
        <end position="90"/>
    </location>
</feature>
<feature type="helix" evidence="10">
    <location>
        <begin position="93"/>
        <end position="97"/>
    </location>
</feature>
<feature type="strand" evidence="10">
    <location>
        <begin position="100"/>
        <end position="106"/>
    </location>
</feature>
<feature type="turn" evidence="9">
    <location>
        <begin position="110"/>
        <end position="113"/>
    </location>
</feature>
<feature type="helix" evidence="10">
    <location>
        <begin position="118"/>
        <end position="123"/>
    </location>
</feature>
<feature type="turn" evidence="10">
    <location>
        <begin position="125"/>
        <end position="127"/>
    </location>
</feature>
<feature type="strand" evidence="10">
    <location>
        <begin position="128"/>
        <end position="132"/>
    </location>
</feature>
<feature type="helix" evidence="10">
    <location>
        <begin position="140"/>
        <end position="151"/>
    </location>
</feature>
<feature type="helix" evidence="10">
    <location>
        <begin position="157"/>
        <end position="159"/>
    </location>
</feature>
<feature type="strand" evidence="10">
    <location>
        <begin position="162"/>
        <end position="165"/>
    </location>
</feature>
<feature type="strand" evidence="10">
    <location>
        <begin position="167"/>
        <end position="171"/>
    </location>
</feature>
<feature type="strand" evidence="10">
    <location>
        <begin position="174"/>
        <end position="177"/>
    </location>
</feature>
<feature type="strand" evidence="10">
    <location>
        <begin position="180"/>
        <end position="184"/>
    </location>
</feature>
<feature type="helix" evidence="10">
    <location>
        <begin position="196"/>
        <end position="204"/>
    </location>
</feature>
<reference key="1">
    <citation type="journal article" date="1997" name="Nature">
        <title>The nucleotide sequence of Saccharomyces cerevisiae chromosome XV.</title>
        <authorList>
            <person name="Dujon B."/>
            <person name="Albermann K."/>
            <person name="Aldea M."/>
            <person name="Alexandraki D."/>
            <person name="Ansorge W."/>
            <person name="Arino J."/>
            <person name="Benes V."/>
            <person name="Bohn C."/>
            <person name="Bolotin-Fukuhara M."/>
            <person name="Bordonne R."/>
            <person name="Boyer J."/>
            <person name="Camasses A."/>
            <person name="Casamayor A."/>
            <person name="Casas C."/>
            <person name="Cheret G."/>
            <person name="Cziepluch C."/>
            <person name="Daignan-Fornier B."/>
            <person name="Dang V.-D."/>
            <person name="de Haan M."/>
            <person name="Delius H."/>
            <person name="Durand P."/>
            <person name="Fairhead C."/>
            <person name="Feldmann H."/>
            <person name="Gaillon L."/>
            <person name="Galisson F."/>
            <person name="Gamo F.-J."/>
            <person name="Gancedo C."/>
            <person name="Goffeau A."/>
            <person name="Goulding S.E."/>
            <person name="Grivell L.A."/>
            <person name="Habbig B."/>
            <person name="Hand N.J."/>
            <person name="Hani J."/>
            <person name="Hattenhorst U."/>
            <person name="Hebling U."/>
            <person name="Hernando Y."/>
            <person name="Herrero E."/>
            <person name="Heumann K."/>
            <person name="Hiesel R."/>
            <person name="Hilger F."/>
            <person name="Hofmann B."/>
            <person name="Hollenberg C.P."/>
            <person name="Hughes B."/>
            <person name="Jauniaux J.-C."/>
            <person name="Kalogeropoulos A."/>
            <person name="Katsoulou C."/>
            <person name="Kordes E."/>
            <person name="Lafuente M.J."/>
            <person name="Landt O."/>
            <person name="Louis E.J."/>
            <person name="Maarse A.C."/>
            <person name="Madania A."/>
            <person name="Mannhaupt G."/>
            <person name="Marck C."/>
            <person name="Martin R.P."/>
            <person name="Mewes H.-W."/>
            <person name="Michaux G."/>
            <person name="Paces V."/>
            <person name="Parle-McDermott A.G."/>
            <person name="Pearson B.M."/>
            <person name="Perrin A."/>
            <person name="Pettersson B."/>
            <person name="Poch O."/>
            <person name="Pohl T.M."/>
            <person name="Poirey R."/>
            <person name="Portetelle D."/>
            <person name="Pujol A."/>
            <person name="Purnelle B."/>
            <person name="Ramezani Rad M."/>
            <person name="Rechmann S."/>
            <person name="Schwager C."/>
            <person name="Schweizer M."/>
            <person name="Sor F."/>
            <person name="Sterky F."/>
            <person name="Tarassov I.A."/>
            <person name="Teodoru C."/>
            <person name="Tettelin H."/>
            <person name="Thierry A."/>
            <person name="Tobiasch E."/>
            <person name="Tzermia M."/>
            <person name="Uhlen M."/>
            <person name="Unseld M."/>
            <person name="Valens M."/>
            <person name="Vandenbol M."/>
            <person name="Vetter I."/>
            <person name="Vlcek C."/>
            <person name="Voet M."/>
            <person name="Volckaert G."/>
            <person name="Voss H."/>
            <person name="Wambutt R."/>
            <person name="Wedler H."/>
            <person name="Wiemann S."/>
            <person name="Winsor B."/>
            <person name="Wolfe K.H."/>
            <person name="Zollner A."/>
            <person name="Zumstein E."/>
            <person name="Kleine K."/>
        </authorList>
    </citation>
    <scope>NUCLEOTIDE SEQUENCE [LARGE SCALE GENOMIC DNA]</scope>
    <source>
        <strain>ATCC 204508 / S288c</strain>
    </source>
</reference>
<reference key="2">
    <citation type="journal article" date="2014" name="G3 (Bethesda)">
        <title>The reference genome sequence of Saccharomyces cerevisiae: Then and now.</title>
        <authorList>
            <person name="Engel S.R."/>
            <person name="Dietrich F.S."/>
            <person name="Fisk D.G."/>
            <person name="Binkley G."/>
            <person name="Balakrishnan R."/>
            <person name="Costanzo M.C."/>
            <person name="Dwight S.S."/>
            <person name="Hitz B.C."/>
            <person name="Karra K."/>
            <person name="Nash R.S."/>
            <person name="Weng S."/>
            <person name="Wong E.D."/>
            <person name="Lloyd P."/>
            <person name="Skrzypek M.S."/>
            <person name="Miyasato S.R."/>
            <person name="Simison M."/>
            <person name="Cherry J.M."/>
        </authorList>
    </citation>
    <scope>GENOME REANNOTATION</scope>
    <source>
        <strain>ATCC 204508 / S288c</strain>
    </source>
</reference>
<reference key="3">
    <citation type="journal article" date="2003" name="Nature">
        <title>Global analysis of protein localization in budding yeast.</title>
        <authorList>
            <person name="Huh W.-K."/>
            <person name="Falvo J.V."/>
            <person name="Gerke L.C."/>
            <person name="Carroll A.S."/>
            <person name="Howson R.W."/>
            <person name="Weissman J.S."/>
            <person name="O'Shea E.K."/>
        </authorList>
    </citation>
    <scope>SUBCELLULAR LOCATION [LARGE SCALE ANALYSIS]</scope>
</reference>
<reference key="4">
    <citation type="journal article" date="2003" name="Nature">
        <title>Global analysis of protein expression in yeast.</title>
        <authorList>
            <person name="Ghaemmaghami S."/>
            <person name="Huh W.-K."/>
            <person name="Bower K."/>
            <person name="Howson R.W."/>
            <person name="Belle A."/>
            <person name="Dephoure N."/>
            <person name="O'Shea E.K."/>
            <person name="Weissman J.S."/>
        </authorList>
    </citation>
    <scope>LEVEL OF PROTEIN EXPRESSION [LARGE SCALE ANALYSIS]</scope>
</reference>
<reference key="5">
    <citation type="journal article" date="2007" name="J. Proteome Res.">
        <title>Large-scale phosphorylation analysis of alpha-factor-arrested Saccharomyces cerevisiae.</title>
        <authorList>
            <person name="Li X."/>
            <person name="Gerber S.A."/>
            <person name="Rudner A.D."/>
            <person name="Beausoleil S.A."/>
            <person name="Haas W."/>
            <person name="Villen J."/>
            <person name="Elias J.E."/>
            <person name="Gygi S.P."/>
        </authorList>
    </citation>
    <scope>PHOSPHORYLATION [LARGE SCALE ANALYSIS] AT SER-204 AND SER-207</scope>
    <scope>IDENTIFICATION BY MASS SPECTROMETRY [LARGE SCALE ANALYSIS]</scope>
    <source>
        <strain>ADR376</strain>
    </source>
</reference>
<reference key="6">
    <citation type="journal article" date="2012" name="Biochemistry">
        <title>Identification of methylated proteins in the yeast small ribosomal subunit: a role for SPOUT methyltransferases in protein arginine methylation.</title>
        <authorList>
            <person name="Young B.D."/>
            <person name="Weiss D.I."/>
            <person name="Zurita-Lopez C.I."/>
            <person name="Webb K.J."/>
            <person name="Clarke S.G."/>
            <person name="McBride A.E."/>
        </authorList>
    </citation>
    <scope>FUNCTION</scope>
    <scope>CATALYTIC ACTIVITY</scope>
</reference>
<accession>Q12314</accession>
<accession>D6W288</accession>
<dbReference type="EC" id="2.1.1.-" evidence="3"/>
<dbReference type="EMBL" id="X87331">
    <property type="protein sequence ID" value="CAA60770.1"/>
    <property type="molecule type" value="Genomic_DNA"/>
</dbReference>
<dbReference type="EMBL" id="Z74929">
    <property type="protein sequence ID" value="CAA99211.1"/>
    <property type="molecule type" value="Genomic_DNA"/>
</dbReference>
<dbReference type="EMBL" id="BK006948">
    <property type="protein sequence ID" value="DAA10804.1"/>
    <property type="molecule type" value="Genomic_DNA"/>
</dbReference>
<dbReference type="PIR" id="S54627">
    <property type="entry name" value="S54627"/>
</dbReference>
<dbReference type="RefSeq" id="NP_014664.1">
    <property type="nucleotide sequence ID" value="NM_001183440.1"/>
</dbReference>
<dbReference type="PDB" id="5C74">
    <property type="method" value="X-ray"/>
    <property type="resolution" value="1.90 A"/>
    <property type="chains" value="A/B=1-204"/>
</dbReference>
<dbReference type="PDB" id="5C77">
    <property type="method" value="X-ray"/>
    <property type="resolution" value="2.50 A"/>
    <property type="chains" value="A/B=1-213"/>
</dbReference>
<dbReference type="PDB" id="5H5D">
    <property type="method" value="X-ray"/>
    <property type="resolution" value="2.70 A"/>
    <property type="chains" value="A=2-213"/>
</dbReference>
<dbReference type="PDB" id="5H5E">
    <property type="method" value="X-ray"/>
    <property type="resolution" value="2.09 A"/>
    <property type="chains" value="A=2-213"/>
</dbReference>
<dbReference type="PDB" id="5H5F">
    <property type="method" value="X-ray"/>
    <property type="resolution" value="1.70 A"/>
    <property type="chains" value="A=2-213"/>
</dbReference>
<dbReference type="PDBsum" id="5C74"/>
<dbReference type="PDBsum" id="5C77"/>
<dbReference type="PDBsum" id="5H5D"/>
<dbReference type="PDBsum" id="5H5E"/>
<dbReference type="PDBsum" id="5H5F"/>
<dbReference type="SMR" id="Q12314"/>
<dbReference type="BioGRID" id="34425">
    <property type="interactions" value="62"/>
</dbReference>
<dbReference type="FunCoup" id="Q12314">
    <property type="interactions" value="45"/>
</dbReference>
<dbReference type="IntAct" id="Q12314">
    <property type="interactions" value="4"/>
</dbReference>
<dbReference type="MINT" id="Q12314"/>
<dbReference type="STRING" id="4932.YOR021C"/>
<dbReference type="iPTMnet" id="Q12314"/>
<dbReference type="PaxDb" id="4932-YOR021C"/>
<dbReference type="PeptideAtlas" id="Q12314"/>
<dbReference type="EnsemblFungi" id="YOR021C_mRNA">
    <property type="protein sequence ID" value="YOR021C"/>
    <property type="gene ID" value="YOR021C"/>
</dbReference>
<dbReference type="GeneID" id="854186"/>
<dbReference type="KEGG" id="sce:YOR021C"/>
<dbReference type="AGR" id="SGD:S000005547"/>
<dbReference type="SGD" id="S000005547">
    <property type="gene designation" value="SFM1"/>
</dbReference>
<dbReference type="VEuPathDB" id="FungiDB:YOR021C"/>
<dbReference type="eggNOG" id="ENOG502RXXJ">
    <property type="taxonomic scope" value="Eukaryota"/>
</dbReference>
<dbReference type="HOGENOM" id="CLU_080487_0_0_1"/>
<dbReference type="InParanoid" id="Q12314"/>
<dbReference type="OMA" id="LEYIHIC"/>
<dbReference type="OrthoDB" id="373498at2759"/>
<dbReference type="BioCyc" id="YEAST:G3O-33569-MONOMER"/>
<dbReference type="BioGRID-ORCS" id="854186">
    <property type="hits" value="0 hits in 10 CRISPR screens"/>
</dbReference>
<dbReference type="EvolutionaryTrace" id="Q12314"/>
<dbReference type="PRO" id="PR:Q12314"/>
<dbReference type="Proteomes" id="UP000002311">
    <property type="component" value="Chromosome XV"/>
</dbReference>
<dbReference type="RNAct" id="Q12314">
    <property type="molecule type" value="protein"/>
</dbReference>
<dbReference type="GO" id="GO:0005737">
    <property type="term" value="C:cytoplasm"/>
    <property type="evidence" value="ECO:0007669"/>
    <property type="project" value="UniProtKB-SubCell"/>
</dbReference>
<dbReference type="GO" id="GO:0035241">
    <property type="term" value="F:protein-arginine omega-N monomethyltransferase activity"/>
    <property type="evidence" value="ECO:0000314"/>
    <property type="project" value="SGD"/>
</dbReference>
<dbReference type="GO" id="GO:0032259">
    <property type="term" value="P:methylation"/>
    <property type="evidence" value="ECO:0007669"/>
    <property type="project" value="UniProtKB-KW"/>
</dbReference>
<dbReference type="CDD" id="cd18090">
    <property type="entry name" value="Arginine_MT_Sfm1"/>
    <property type="match status" value="1"/>
</dbReference>
<dbReference type="InterPro" id="IPR007364">
    <property type="entry name" value="SFM1-like"/>
</dbReference>
<dbReference type="PANTHER" id="PTHR35517">
    <property type="entry name" value="PROTEIN ARGININE N-METHYLTRANSFERASE SFM1"/>
    <property type="match status" value="1"/>
</dbReference>
<dbReference type="PANTHER" id="PTHR35517:SF1">
    <property type="entry name" value="PROTEIN ARGININE N-METHYLTRANSFERASE SFM1"/>
    <property type="match status" value="1"/>
</dbReference>
<dbReference type="Pfam" id="PF04252">
    <property type="entry name" value="SFM1-like"/>
    <property type="match status" value="1"/>
</dbReference>
<name>SFM1_YEAST</name>
<sequence>MKYIIEHMEEGFSEWVILEYSQILREVGAENLILSSLPESTTEKDIPQRLLKLGLRWTTKDLKGINEDFKDLELLKDGRVCLLDPRATIDLQPEDATKFDYFVFGGILGDHPPRDRTKELKTAYPNLLISRRLGDKQMTTDTAIRTTQLIIKDRIAFEDIKFIDYPEFRFNKNEATEMPFRYVLDKEGKPILPEGMLDLIKKDSAQSLDDLLM</sequence>
<proteinExistence type="evidence at protein level"/>
<evidence type="ECO:0000269" key="1">
    <source>
    </source>
</evidence>
<evidence type="ECO:0000269" key="2">
    <source>
    </source>
</evidence>
<evidence type="ECO:0000269" key="3">
    <source>
    </source>
</evidence>
<evidence type="ECO:0000303" key="4">
    <source>
    </source>
</evidence>
<evidence type="ECO:0000305" key="5"/>
<evidence type="ECO:0000305" key="6">
    <source>
    </source>
</evidence>
<evidence type="ECO:0000312" key="7">
    <source>
        <dbReference type="SGD" id="S000005547"/>
    </source>
</evidence>
<evidence type="ECO:0007744" key="8">
    <source>
    </source>
</evidence>
<evidence type="ECO:0007829" key="9">
    <source>
        <dbReference type="PDB" id="5C74"/>
    </source>
</evidence>
<evidence type="ECO:0007829" key="10">
    <source>
        <dbReference type="PDB" id="5H5F"/>
    </source>
</evidence>